<keyword id="KW-0413">Isomerase</keyword>
<keyword id="KW-0819">tRNA processing</keyword>
<proteinExistence type="inferred from homology"/>
<organism>
    <name type="scientific">Bartonella tribocorum (strain CIP 105476 / IBS 506)</name>
    <dbReference type="NCBI Taxonomy" id="382640"/>
    <lineage>
        <taxon>Bacteria</taxon>
        <taxon>Pseudomonadati</taxon>
        <taxon>Pseudomonadota</taxon>
        <taxon>Alphaproteobacteria</taxon>
        <taxon>Hyphomicrobiales</taxon>
        <taxon>Bartonellaceae</taxon>
        <taxon>Bartonella</taxon>
    </lineage>
</organism>
<dbReference type="EC" id="5.4.99.25" evidence="1"/>
<dbReference type="EMBL" id="AM260525">
    <property type="protein sequence ID" value="CAK00713.1"/>
    <property type="molecule type" value="Genomic_DNA"/>
</dbReference>
<dbReference type="RefSeq" id="WP_012230630.1">
    <property type="nucleotide sequence ID" value="NC_010161.1"/>
</dbReference>
<dbReference type="SMR" id="A9IMS8"/>
<dbReference type="KEGG" id="btr:BT_0237"/>
<dbReference type="eggNOG" id="COG0130">
    <property type="taxonomic scope" value="Bacteria"/>
</dbReference>
<dbReference type="HOGENOM" id="CLU_032087_0_3_5"/>
<dbReference type="Proteomes" id="UP000001592">
    <property type="component" value="Chromosome"/>
</dbReference>
<dbReference type="GO" id="GO:0003723">
    <property type="term" value="F:RNA binding"/>
    <property type="evidence" value="ECO:0007669"/>
    <property type="project" value="InterPro"/>
</dbReference>
<dbReference type="GO" id="GO:0160148">
    <property type="term" value="F:tRNA pseudouridine(55) synthase activity"/>
    <property type="evidence" value="ECO:0007669"/>
    <property type="project" value="UniProtKB-EC"/>
</dbReference>
<dbReference type="GO" id="GO:1990481">
    <property type="term" value="P:mRNA pseudouridine synthesis"/>
    <property type="evidence" value="ECO:0007669"/>
    <property type="project" value="TreeGrafter"/>
</dbReference>
<dbReference type="GO" id="GO:0031119">
    <property type="term" value="P:tRNA pseudouridine synthesis"/>
    <property type="evidence" value="ECO:0007669"/>
    <property type="project" value="UniProtKB-UniRule"/>
</dbReference>
<dbReference type="CDD" id="cd02573">
    <property type="entry name" value="PseudoU_synth_EcTruB"/>
    <property type="match status" value="1"/>
</dbReference>
<dbReference type="Gene3D" id="3.30.2350.10">
    <property type="entry name" value="Pseudouridine synthase"/>
    <property type="match status" value="1"/>
</dbReference>
<dbReference type="HAMAP" id="MF_01080">
    <property type="entry name" value="TruB_bact"/>
    <property type="match status" value="1"/>
</dbReference>
<dbReference type="InterPro" id="IPR020103">
    <property type="entry name" value="PsdUridine_synth_cat_dom_sf"/>
</dbReference>
<dbReference type="InterPro" id="IPR002501">
    <property type="entry name" value="PsdUridine_synth_N"/>
</dbReference>
<dbReference type="InterPro" id="IPR014780">
    <property type="entry name" value="tRNA_psdUridine_synth_TruB"/>
</dbReference>
<dbReference type="InterPro" id="IPR032819">
    <property type="entry name" value="TruB_C"/>
</dbReference>
<dbReference type="NCBIfam" id="TIGR00431">
    <property type="entry name" value="TruB"/>
    <property type="match status" value="1"/>
</dbReference>
<dbReference type="PANTHER" id="PTHR13767:SF2">
    <property type="entry name" value="PSEUDOURIDYLATE SYNTHASE TRUB1"/>
    <property type="match status" value="1"/>
</dbReference>
<dbReference type="PANTHER" id="PTHR13767">
    <property type="entry name" value="TRNA-PSEUDOURIDINE SYNTHASE"/>
    <property type="match status" value="1"/>
</dbReference>
<dbReference type="Pfam" id="PF16198">
    <property type="entry name" value="TruB_C_2"/>
    <property type="match status" value="1"/>
</dbReference>
<dbReference type="Pfam" id="PF01509">
    <property type="entry name" value="TruB_N"/>
    <property type="match status" value="1"/>
</dbReference>
<dbReference type="SUPFAM" id="SSF55120">
    <property type="entry name" value="Pseudouridine synthase"/>
    <property type="match status" value="1"/>
</dbReference>
<feature type="chain" id="PRO_1000084552" description="tRNA pseudouridine synthase B">
    <location>
        <begin position="1"/>
        <end position="320"/>
    </location>
</feature>
<feature type="active site" description="Nucleophile" evidence="1">
    <location>
        <position position="49"/>
    </location>
</feature>
<name>TRUB_BART1</name>
<protein>
    <recommendedName>
        <fullName evidence="1">tRNA pseudouridine synthase B</fullName>
        <ecNumber evidence="1">5.4.99.25</ecNumber>
    </recommendedName>
    <alternativeName>
        <fullName evidence="1">tRNA pseudouridine(55) synthase</fullName>
        <shortName evidence="1">Psi55 synthase</shortName>
    </alternativeName>
    <alternativeName>
        <fullName evidence="1">tRNA pseudouridylate synthase</fullName>
    </alternativeName>
    <alternativeName>
        <fullName evidence="1">tRNA-uridine isomerase</fullName>
    </alternativeName>
</protein>
<sequence length="320" mass="35837">MARQRKKKGRPVSGWVVFDKPKGMKSTEAVSKIKWLFHAQKAGHAGTLDPLASGLLPIALGEATKTVPYVMQGKKTYRFHIAWGQERSTDDLEGEITKTSLKRPTQEEILALLPQYTGIILQTPPQFSAIKIAGNRAYDLAREGEVIEIPPREVEIETFKLVETPTKEHSVFEITCGKGTYVRSLARDMGRDLGCYGHIADLRRIAVAPFCEEDLVTWDELKAAISPNKNTTDENENSFEKDFLTLDELLIETGAALDCLPHYPLTDTQAQRVMRGHSIPLSAQKTLLDEEEVCVLYKEQLLAIGTLDKGLFKPKRIFTI</sequence>
<reference key="1">
    <citation type="journal article" date="2007" name="Nat. Genet.">
        <title>Genomic analysis of Bartonella identifies type IV secretion systems as host adaptability factors.</title>
        <authorList>
            <person name="Saenz H.L."/>
            <person name="Engel P."/>
            <person name="Stoeckli M.C."/>
            <person name="Lanz C."/>
            <person name="Raddatz G."/>
            <person name="Vayssier-Taussat M."/>
            <person name="Birtles R."/>
            <person name="Schuster S.C."/>
            <person name="Dehio C."/>
        </authorList>
    </citation>
    <scope>NUCLEOTIDE SEQUENCE [LARGE SCALE GENOMIC DNA]</scope>
    <source>
        <strain>CIP 105476 / IBS 506</strain>
    </source>
</reference>
<evidence type="ECO:0000255" key="1">
    <source>
        <dbReference type="HAMAP-Rule" id="MF_01080"/>
    </source>
</evidence>
<gene>
    <name evidence="1" type="primary">truB</name>
    <name type="ordered locus">BT_0237</name>
</gene>
<comment type="function">
    <text evidence="1">Responsible for synthesis of pseudouridine from uracil-55 in the psi GC loop of transfer RNAs.</text>
</comment>
<comment type="catalytic activity">
    <reaction evidence="1">
        <text>uridine(55) in tRNA = pseudouridine(55) in tRNA</text>
        <dbReference type="Rhea" id="RHEA:42532"/>
        <dbReference type="Rhea" id="RHEA-COMP:10101"/>
        <dbReference type="Rhea" id="RHEA-COMP:10102"/>
        <dbReference type="ChEBI" id="CHEBI:65314"/>
        <dbReference type="ChEBI" id="CHEBI:65315"/>
        <dbReference type="EC" id="5.4.99.25"/>
    </reaction>
</comment>
<comment type="similarity">
    <text evidence="1">Belongs to the pseudouridine synthase TruB family. Type 1 subfamily.</text>
</comment>
<accession>A9IMS8</accession>